<proteinExistence type="inferred from homology"/>
<keyword id="KW-0150">Chloroplast</keyword>
<keyword id="KW-0934">Plastid</keyword>
<keyword id="KW-0687">Ribonucleoprotein</keyword>
<keyword id="KW-0689">Ribosomal protein</keyword>
<comment type="subcellular location">
    <subcellularLocation>
        <location>Plastid</location>
        <location>Chloroplast</location>
    </subcellularLocation>
</comment>
<comment type="similarity">
    <text evidence="1">Belongs to the bacterial ribosomal protein bL36 family.</text>
</comment>
<accession>A0T0Z1</accession>
<geneLocation type="chloroplast"/>
<evidence type="ECO:0000255" key="1">
    <source>
        <dbReference type="HAMAP-Rule" id="MF_00251"/>
    </source>
</evidence>
<evidence type="ECO:0000305" key="2"/>
<gene>
    <name evidence="1" type="primary">rpl36</name>
</gene>
<dbReference type="EMBL" id="EF067921">
    <property type="protein sequence ID" value="ABK20826.1"/>
    <property type="molecule type" value="Genomic_DNA"/>
</dbReference>
<dbReference type="RefSeq" id="YP_874603.1">
    <property type="nucleotide sequence ID" value="NC_008589.1"/>
</dbReference>
<dbReference type="SMR" id="A0T0Z1"/>
<dbReference type="FunCoup" id="A0T0Z1">
    <property type="interactions" value="1"/>
</dbReference>
<dbReference type="STRING" id="35128.A0T0Z1"/>
<dbReference type="GeneID" id="4524766"/>
<dbReference type="InParanoid" id="A0T0Z1"/>
<dbReference type="GO" id="GO:0009507">
    <property type="term" value="C:chloroplast"/>
    <property type="evidence" value="ECO:0007669"/>
    <property type="project" value="UniProtKB-SubCell"/>
</dbReference>
<dbReference type="GO" id="GO:1990904">
    <property type="term" value="C:ribonucleoprotein complex"/>
    <property type="evidence" value="ECO:0007669"/>
    <property type="project" value="UniProtKB-KW"/>
</dbReference>
<dbReference type="GO" id="GO:0005840">
    <property type="term" value="C:ribosome"/>
    <property type="evidence" value="ECO:0007669"/>
    <property type="project" value="UniProtKB-KW"/>
</dbReference>
<dbReference type="GO" id="GO:0003735">
    <property type="term" value="F:structural constituent of ribosome"/>
    <property type="evidence" value="ECO:0007669"/>
    <property type="project" value="InterPro"/>
</dbReference>
<dbReference type="GO" id="GO:0006412">
    <property type="term" value="P:translation"/>
    <property type="evidence" value="ECO:0007669"/>
    <property type="project" value="UniProtKB-UniRule"/>
</dbReference>
<dbReference type="HAMAP" id="MF_00251">
    <property type="entry name" value="Ribosomal_bL36"/>
    <property type="match status" value="1"/>
</dbReference>
<dbReference type="InterPro" id="IPR000473">
    <property type="entry name" value="Ribosomal_bL36"/>
</dbReference>
<dbReference type="InterPro" id="IPR035977">
    <property type="entry name" value="Ribosomal_bL36_sp"/>
</dbReference>
<dbReference type="NCBIfam" id="TIGR01022">
    <property type="entry name" value="rpmJ_bact"/>
    <property type="match status" value="1"/>
</dbReference>
<dbReference type="PANTHER" id="PTHR42888">
    <property type="entry name" value="50S RIBOSOMAL PROTEIN L36, CHLOROPLASTIC"/>
    <property type="match status" value="1"/>
</dbReference>
<dbReference type="PANTHER" id="PTHR42888:SF1">
    <property type="entry name" value="LARGE RIBOSOMAL SUBUNIT PROTEIN BL36C"/>
    <property type="match status" value="1"/>
</dbReference>
<dbReference type="Pfam" id="PF00444">
    <property type="entry name" value="Ribosomal_L36"/>
    <property type="match status" value="1"/>
</dbReference>
<dbReference type="SUPFAM" id="SSF57840">
    <property type="entry name" value="Ribosomal protein L36"/>
    <property type="match status" value="1"/>
</dbReference>
<dbReference type="PROSITE" id="PS00828">
    <property type="entry name" value="RIBOSOMAL_L36"/>
    <property type="match status" value="1"/>
</dbReference>
<reference key="1">
    <citation type="journal article" date="2007" name="Mol. Genet. Genomics">
        <title>Chloroplast genomes of the diatoms Phaeodactylum tricornutum and Thalassiosira pseudonana: comparison with other plastid genomes of the red lineage.</title>
        <authorList>
            <person name="Oudot-Le Secq M.-P."/>
            <person name="Grimwood J."/>
            <person name="Shapiro H."/>
            <person name="Armbrust E.V."/>
            <person name="Bowler C."/>
            <person name="Green B.R."/>
        </authorList>
    </citation>
    <scope>NUCLEOTIDE SEQUENCE [LARGE SCALE GENOMIC DNA]</scope>
    <source>
        <strain>CCMP1335 / NEPCC58 / CCAP 1085/12</strain>
    </source>
</reference>
<organism>
    <name type="scientific">Thalassiosira pseudonana</name>
    <name type="common">Marine diatom</name>
    <name type="synonym">Cyclotella nana</name>
    <dbReference type="NCBI Taxonomy" id="35128"/>
    <lineage>
        <taxon>Eukaryota</taxon>
        <taxon>Sar</taxon>
        <taxon>Stramenopiles</taxon>
        <taxon>Ochrophyta</taxon>
        <taxon>Bacillariophyta</taxon>
        <taxon>Coscinodiscophyceae</taxon>
        <taxon>Thalassiosirophycidae</taxon>
        <taxon>Thalassiosirales</taxon>
        <taxon>Thalassiosiraceae</taxon>
        <taxon>Thalassiosira</taxon>
    </lineage>
</organism>
<sequence length="37" mass="4404">MKVRPSVKKMCEKCRVIKRHGKIMVICQNPKHKQRQG</sequence>
<feature type="chain" id="PRO_0000276845" description="Large ribosomal subunit protein bL36c">
    <location>
        <begin position="1"/>
        <end position="37"/>
    </location>
</feature>
<protein>
    <recommendedName>
        <fullName evidence="1">Large ribosomal subunit protein bL36c</fullName>
    </recommendedName>
    <alternativeName>
        <fullName evidence="2">50S ribosomal protein L36, chloroplastic</fullName>
    </alternativeName>
</protein>
<name>RK36_THAPS</name>